<accession>P94498</accession>
<accession>O34620</accession>
<organism>
    <name type="scientific">Bacillus subtilis (strain 168)</name>
    <dbReference type="NCBI Taxonomy" id="224308"/>
    <lineage>
        <taxon>Bacteria</taxon>
        <taxon>Bacillati</taxon>
        <taxon>Bacillota</taxon>
        <taxon>Bacilli</taxon>
        <taxon>Bacillales</taxon>
        <taxon>Bacillaceae</taxon>
        <taxon>Bacillus</taxon>
    </lineage>
</organism>
<gene>
    <name type="primary">cysH</name>
    <name type="ordered locus">BSU15570</name>
</gene>
<feature type="chain" id="PRO_0000100626" description="Adenosine 5'-phosphosulfate reductase 1">
    <location>
        <begin position="1"/>
        <end position="233"/>
    </location>
</feature>
<feature type="active site" description="Nucleophile; cysteine thiosulfonate intermediate" evidence="1">
    <location>
        <position position="229"/>
    </location>
</feature>
<feature type="binding site" evidence="1">
    <location>
        <position position="120"/>
    </location>
    <ligand>
        <name>[4Fe-4S] cluster</name>
        <dbReference type="ChEBI" id="CHEBI:49883"/>
    </ligand>
</feature>
<feature type="binding site" evidence="1">
    <location>
        <position position="121"/>
    </location>
    <ligand>
        <name>[4Fe-4S] cluster</name>
        <dbReference type="ChEBI" id="CHEBI:49883"/>
    </ligand>
</feature>
<feature type="binding site" evidence="1">
    <location>
        <position position="203"/>
    </location>
    <ligand>
        <name>[4Fe-4S] cluster</name>
        <dbReference type="ChEBI" id="CHEBI:49883"/>
    </ligand>
</feature>
<feature type="binding site" evidence="1">
    <location>
        <position position="206"/>
    </location>
    <ligand>
        <name>[4Fe-4S] cluster</name>
        <dbReference type="ChEBI" id="CHEBI:49883"/>
    </ligand>
</feature>
<feature type="sequence conflict" description="In Ref. 1; AAC44833." evidence="4" ref="1">
    <original>SGHPAWLS</original>
    <variation>QDISLAF</variation>
    <location>
        <begin position="134"/>
        <end position="141"/>
    </location>
</feature>
<feature type="sequence conflict" description="In Ref. 1; AAC44833." evidence="4" ref="1">
    <original>LIHW</original>
    <variation>HYPL</variation>
    <location>
        <begin position="171"/>
        <end position="174"/>
    </location>
</feature>
<sequence length="233" mass="26975">MLTYDNWEEPTITFPEDDPYKGALSVLKWAYGHYGDQLVYACSFGIEGIVLIDLIYKVKKDAEIVFLDTGLHFKETYETIERVKERYPGLNIILKKPDLTLEEQAEEHGDKLWEREPNQCCYLRKVVPLREALSGHPAWLSGLRRDQGPSRANTNFLNKDEKFKSVKVCPLIHWTWKDIWRYTSRNELDYNPLHDQGYPSIGCAPCTSPAFTAEDLRSGRWNGMAKTECGLHE</sequence>
<keyword id="KW-0963">Cytoplasm</keyword>
<keyword id="KW-0408">Iron</keyword>
<keyword id="KW-0411">Iron-sulfur</keyword>
<keyword id="KW-0479">Metal-binding</keyword>
<keyword id="KW-0560">Oxidoreductase</keyword>
<keyword id="KW-1185">Reference proteome</keyword>
<dbReference type="EC" id="1.8.4.10" evidence="1 3"/>
<dbReference type="EMBL" id="U76751">
    <property type="protein sequence ID" value="AAC44833.1"/>
    <property type="molecule type" value="Genomic_DNA"/>
</dbReference>
<dbReference type="EMBL" id="AJ000974">
    <property type="protein sequence ID" value="CAA04409.1"/>
    <property type="molecule type" value="Genomic_DNA"/>
</dbReference>
<dbReference type="EMBL" id="AL009126">
    <property type="protein sequence ID" value="CAB13431.1"/>
    <property type="molecule type" value="Genomic_DNA"/>
</dbReference>
<dbReference type="PIR" id="H69611">
    <property type="entry name" value="H69611"/>
</dbReference>
<dbReference type="RefSeq" id="NP_389440.1">
    <property type="nucleotide sequence ID" value="NC_000964.3"/>
</dbReference>
<dbReference type="RefSeq" id="WP_003232103.1">
    <property type="nucleotide sequence ID" value="NZ_OZ025638.1"/>
</dbReference>
<dbReference type="SMR" id="P94498"/>
<dbReference type="FunCoup" id="P94498">
    <property type="interactions" value="336"/>
</dbReference>
<dbReference type="STRING" id="224308.BSU15570"/>
<dbReference type="PaxDb" id="224308-BSU15570"/>
<dbReference type="EnsemblBacteria" id="CAB13431">
    <property type="protein sequence ID" value="CAB13431"/>
    <property type="gene ID" value="BSU_15570"/>
</dbReference>
<dbReference type="GeneID" id="938645"/>
<dbReference type="KEGG" id="bsu:BSU15570"/>
<dbReference type="PATRIC" id="fig|224308.179.peg.1697"/>
<dbReference type="eggNOG" id="COG0175">
    <property type="taxonomic scope" value="Bacteria"/>
</dbReference>
<dbReference type="InParanoid" id="P94498"/>
<dbReference type="OrthoDB" id="9772604at2"/>
<dbReference type="PhylomeDB" id="P94498"/>
<dbReference type="BioCyc" id="BSUB:BSU15570-MONOMER"/>
<dbReference type="Proteomes" id="UP000001570">
    <property type="component" value="Chromosome"/>
</dbReference>
<dbReference type="GO" id="GO:0005737">
    <property type="term" value="C:cytoplasm"/>
    <property type="evidence" value="ECO:0007669"/>
    <property type="project" value="UniProtKB-SubCell"/>
</dbReference>
<dbReference type="GO" id="GO:0051539">
    <property type="term" value="F:4 iron, 4 sulfur cluster binding"/>
    <property type="evidence" value="ECO:0007669"/>
    <property type="project" value="UniProtKB-UniRule"/>
</dbReference>
<dbReference type="GO" id="GO:0043866">
    <property type="term" value="F:adenylyl-sulfate reductase (thioredoxin) activity"/>
    <property type="evidence" value="ECO:0007669"/>
    <property type="project" value="UniProtKB-EC"/>
</dbReference>
<dbReference type="GO" id="GO:0046872">
    <property type="term" value="F:metal ion binding"/>
    <property type="evidence" value="ECO:0007669"/>
    <property type="project" value="UniProtKB-KW"/>
</dbReference>
<dbReference type="GO" id="GO:0004604">
    <property type="term" value="F:phosphoadenylyl-sulfate reductase (thioredoxin) activity"/>
    <property type="evidence" value="ECO:0000318"/>
    <property type="project" value="GO_Central"/>
</dbReference>
<dbReference type="GO" id="GO:0019344">
    <property type="term" value="P:cysteine biosynthetic process"/>
    <property type="evidence" value="ECO:0007669"/>
    <property type="project" value="InterPro"/>
</dbReference>
<dbReference type="GO" id="GO:0070814">
    <property type="term" value="P:hydrogen sulfide biosynthetic process"/>
    <property type="evidence" value="ECO:0007669"/>
    <property type="project" value="UniProtKB-UniRule"/>
</dbReference>
<dbReference type="GO" id="GO:0019379">
    <property type="term" value="P:sulfate assimilation, phosphoadenylyl sulfate reduction by phosphoadenylyl-sulfate reductase (thioredoxin)"/>
    <property type="evidence" value="ECO:0000318"/>
    <property type="project" value="GO_Central"/>
</dbReference>
<dbReference type="CDD" id="cd23945">
    <property type="entry name" value="PAPS_reductase"/>
    <property type="match status" value="1"/>
</dbReference>
<dbReference type="FunFam" id="3.40.50.620:FF:000095">
    <property type="entry name" value="Phosphoadenosine phosphosulfate reductase"/>
    <property type="match status" value="1"/>
</dbReference>
<dbReference type="Gene3D" id="3.40.50.620">
    <property type="entry name" value="HUPs"/>
    <property type="match status" value="1"/>
</dbReference>
<dbReference type="HAMAP" id="MF_00063">
    <property type="entry name" value="CysH"/>
    <property type="match status" value="1"/>
</dbReference>
<dbReference type="InterPro" id="IPR011798">
    <property type="entry name" value="APS_reductase"/>
</dbReference>
<dbReference type="InterPro" id="IPR004511">
    <property type="entry name" value="PAPS/APS_Rdtase"/>
</dbReference>
<dbReference type="InterPro" id="IPR002500">
    <property type="entry name" value="PAPS_reduct_dom"/>
</dbReference>
<dbReference type="InterPro" id="IPR014729">
    <property type="entry name" value="Rossmann-like_a/b/a_fold"/>
</dbReference>
<dbReference type="NCBIfam" id="TIGR02055">
    <property type="entry name" value="APS_reductase"/>
    <property type="match status" value="1"/>
</dbReference>
<dbReference type="NCBIfam" id="TIGR00434">
    <property type="entry name" value="cysH"/>
    <property type="match status" value="1"/>
</dbReference>
<dbReference type="NCBIfam" id="NF002537">
    <property type="entry name" value="PRK02090.1"/>
    <property type="match status" value="1"/>
</dbReference>
<dbReference type="PANTHER" id="PTHR46509">
    <property type="entry name" value="PHOSPHOADENOSINE PHOSPHOSULFATE REDUCTASE"/>
    <property type="match status" value="1"/>
</dbReference>
<dbReference type="PANTHER" id="PTHR46509:SF1">
    <property type="entry name" value="PHOSPHOADENOSINE PHOSPHOSULFATE REDUCTASE"/>
    <property type="match status" value="1"/>
</dbReference>
<dbReference type="Pfam" id="PF01507">
    <property type="entry name" value="PAPS_reduct"/>
    <property type="match status" value="1"/>
</dbReference>
<dbReference type="PIRSF" id="PIRSF000857">
    <property type="entry name" value="PAPS_reductase"/>
    <property type="match status" value="1"/>
</dbReference>
<dbReference type="SUPFAM" id="SSF52402">
    <property type="entry name" value="Adenine nucleotide alpha hydrolases-like"/>
    <property type="match status" value="1"/>
</dbReference>
<proteinExistence type="evidence at protein level"/>
<evidence type="ECO:0000255" key="1">
    <source>
        <dbReference type="HAMAP-Rule" id="MF_00063"/>
    </source>
</evidence>
<evidence type="ECO:0000269" key="2">
    <source>
    </source>
</evidence>
<evidence type="ECO:0000269" key="3">
    <source>
    </source>
</evidence>
<evidence type="ECO:0000305" key="4"/>
<reference key="1">
    <citation type="journal article" date="1997" name="J. Bacteriol.">
        <title>L-cysteine biosynthesis in Bacillus subtilis: identification, sequencing, and functional characterization of the gene coding for phosphoadenylylsulfate sulfotransferase.</title>
        <authorList>
            <person name="Mansilla M.C."/>
            <person name="de Mendoza D."/>
        </authorList>
    </citation>
    <scope>NUCLEOTIDE SEQUENCE [GENOMIC DNA]</scope>
</reference>
<reference key="2">
    <citation type="submission" date="1997-10" db="EMBL/GenBank/DDBJ databases">
        <title>Cloning and sequencing 8 Kbp of DNA from Bacillus subtilis downstream of the pyr operon.</title>
        <authorList>
            <person name="Foulger D."/>
            <person name="Errington J."/>
        </authorList>
    </citation>
    <scope>NUCLEOTIDE SEQUENCE [GENOMIC DNA]</scope>
    <source>
        <strain>168</strain>
    </source>
</reference>
<reference key="3">
    <citation type="journal article" date="1997" name="Nature">
        <title>The complete genome sequence of the Gram-positive bacterium Bacillus subtilis.</title>
        <authorList>
            <person name="Kunst F."/>
            <person name="Ogasawara N."/>
            <person name="Moszer I."/>
            <person name="Albertini A.M."/>
            <person name="Alloni G."/>
            <person name="Azevedo V."/>
            <person name="Bertero M.G."/>
            <person name="Bessieres P."/>
            <person name="Bolotin A."/>
            <person name="Borchert S."/>
            <person name="Borriss R."/>
            <person name="Boursier L."/>
            <person name="Brans A."/>
            <person name="Braun M."/>
            <person name="Brignell S.C."/>
            <person name="Bron S."/>
            <person name="Brouillet S."/>
            <person name="Bruschi C.V."/>
            <person name="Caldwell B."/>
            <person name="Capuano V."/>
            <person name="Carter N.M."/>
            <person name="Choi S.-K."/>
            <person name="Codani J.-J."/>
            <person name="Connerton I.F."/>
            <person name="Cummings N.J."/>
            <person name="Daniel R.A."/>
            <person name="Denizot F."/>
            <person name="Devine K.M."/>
            <person name="Duesterhoeft A."/>
            <person name="Ehrlich S.D."/>
            <person name="Emmerson P.T."/>
            <person name="Entian K.-D."/>
            <person name="Errington J."/>
            <person name="Fabret C."/>
            <person name="Ferrari E."/>
            <person name="Foulger D."/>
            <person name="Fritz C."/>
            <person name="Fujita M."/>
            <person name="Fujita Y."/>
            <person name="Fuma S."/>
            <person name="Galizzi A."/>
            <person name="Galleron N."/>
            <person name="Ghim S.-Y."/>
            <person name="Glaser P."/>
            <person name="Goffeau A."/>
            <person name="Golightly E.J."/>
            <person name="Grandi G."/>
            <person name="Guiseppi G."/>
            <person name="Guy B.J."/>
            <person name="Haga K."/>
            <person name="Haiech J."/>
            <person name="Harwood C.R."/>
            <person name="Henaut A."/>
            <person name="Hilbert H."/>
            <person name="Holsappel S."/>
            <person name="Hosono S."/>
            <person name="Hullo M.-F."/>
            <person name="Itaya M."/>
            <person name="Jones L.-M."/>
            <person name="Joris B."/>
            <person name="Karamata D."/>
            <person name="Kasahara Y."/>
            <person name="Klaerr-Blanchard M."/>
            <person name="Klein C."/>
            <person name="Kobayashi Y."/>
            <person name="Koetter P."/>
            <person name="Koningstein G."/>
            <person name="Krogh S."/>
            <person name="Kumano M."/>
            <person name="Kurita K."/>
            <person name="Lapidus A."/>
            <person name="Lardinois S."/>
            <person name="Lauber J."/>
            <person name="Lazarevic V."/>
            <person name="Lee S.-M."/>
            <person name="Levine A."/>
            <person name="Liu H."/>
            <person name="Masuda S."/>
            <person name="Mauel C."/>
            <person name="Medigue C."/>
            <person name="Medina N."/>
            <person name="Mellado R.P."/>
            <person name="Mizuno M."/>
            <person name="Moestl D."/>
            <person name="Nakai S."/>
            <person name="Noback M."/>
            <person name="Noone D."/>
            <person name="O'Reilly M."/>
            <person name="Ogawa K."/>
            <person name="Ogiwara A."/>
            <person name="Oudega B."/>
            <person name="Park S.-H."/>
            <person name="Parro V."/>
            <person name="Pohl T.M."/>
            <person name="Portetelle D."/>
            <person name="Porwollik S."/>
            <person name="Prescott A.M."/>
            <person name="Presecan E."/>
            <person name="Pujic P."/>
            <person name="Purnelle B."/>
            <person name="Rapoport G."/>
            <person name="Rey M."/>
            <person name="Reynolds S."/>
            <person name="Rieger M."/>
            <person name="Rivolta C."/>
            <person name="Rocha E."/>
            <person name="Roche B."/>
            <person name="Rose M."/>
            <person name="Sadaie Y."/>
            <person name="Sato T."/>
            <person name="Scanlan E."/>
            <person name="Schleich S."/>
            <person name="Schroeter R."/>
            <person name="Scoffone F."/>
            <person name="Sekiguchi J."/>
            <person name="Sekowska A."/>
            <person name="Seror S.J."/>
            <person name="Serror P."/>
            <person name="Shin B.-S."/>
            <person name="Soldo B."/>
            <person name="Sorokin A."/>
            <person name="Tacconi E."/>
            <person name="Takagi T."/>
            <person name="Takahashi H."/>
            <person name="Takemaru K."/>
            <person name="Takeuchi M."/>
            <person name="Tamakoshi A."/>
            <person name="Tanaka T."/>
            <person name="Terpstra P."/>
            <person name="Tognoni A."/>
            <person name="Tosato V."/>
            <person name="Uchiyama S."/>
            <person name="Vandenbol M."/>
            <person name="Vannier F."/>
            <person name="Vassarotti A."/>
            <person name="Viari A."/>
            <person name="Wambutt R."/>
            <person name="Wedler E."/>
            <person name="Wedler H."/>
            <person name="Weitzenegger T."/>
            <person name="Winters P."/>
            <person name="Wipat A."/>
            <person name="Yamamoto H."/>
            <person name="Yamane K."/>
            <person name="Yasumoto K."/>
            <person name="Yata K."/>
            <person name="Yoshida K."/>
            <person name="Yoshikawa H.-F."/>
            <person name="Zumstein E."/>
            <person name="Yoshikawa H."/>
            <person name="Danchin A."/>
        </authorList>
    </citation>
    <scope>NUCLEOTIDE SEQUENCE [LARGE SCALE GENOMIC DNA]</scope>
    <source>
        <strain>168</strain>
    </source>
</reference>
<reference key="4">
    <citation type="journal article" date="2000" name="J. Bacteriol.">
        <title>Transcriptional control of the sulfur-regulated cysH operon, containing genes involved in L-cysteine biosynthesis in Bacillus subtilis.</title>
        <authorList>
            <person name="Mansilla M.C."/>
            <person name="Albanesi D."/>
            <person name="de Mendoza D."/>
        </authorList>
    </citation>
    <scope>INDUCTION</scope>
    <source>
        <strain>168 / JH642</strain>
    </source>
</reference>
<reference key="5">
    <citation type="journal article" date="2002" name="J. Biol. Chem.">
        <title>5'-adenosinephosphosulfate lies at a metabolic branch point in mycobacteria.</title>
        <authorList>
            <person name="Williams S.J."/>
            <person name="Senaratne R.H."/>
            <person name="Mougous J.D."/>
            <person name="Riley L.W."/>
            <person name="Bertozzi C.R."/>
        </authorList>
    </citation>
    <scope>FUNCTION</scope>
    <scope>CATALYTIC ACTIVITY</scope>
</reference>
<protein>
    <recommendedName>
        <fullName evidence="1">Adenosine 5'-phosphosulfate reductase 1</fullName>
        <shortName evidence="1">APS reductase 1</shortName>
        <ecNumber evidence="1 3">1.8.4.10</ecNumber>
    </recommendedName>
    <alternativeName>
        <fullName evidence="1">5'-adenylylsulfate reductase 1</fullName>
    </alternativeName>
    <alternativeName>
        <fullName evidence="1">Thioredoxin-dependent 5'-adenylylsulfate reductase 1</fullName>
    </alternativeName>
</protein>
<name>CYSH1_BACSU</name>
<comment type="function">
    <text evidence="1 3">Catalyzes the formation of sulfite from adenosine 5'-phosphosulfate (APS) using thioredoxin as an electron donor.</text>
</comment>
<comment type="catalytic activity">
    <reaction evidence="1 3">
        <text>[thioredoxin]-disulfide + sulfite + AMP + 2 H(+) = adenosine 5'-phosphosulfate + [thioredoxin]-dithiol</text>
        <dbReference type="Rhea" id="RHEA:21976"/>
        <dbReference type="Rhea" id="RHEA-COMP:10698"/>
        <dbReference type="Rhea" id="RHEA-COMP:10700"/>
        <dbReference type="ChEBI" id="CHEBI:15378"/>
        <dbReference type="ChEBI" id="CHEBI:17359"/>
        <dbReference type="ChEBI" id="CHEBI:29950"/>
        <dbReference type="ChEBI" id="CHEBI:50058"/>
        <dbReference type="ChEBI" id="CHEBI:58243"/>
        <dbReference type="ChEBI" id="CHEBI:456215"/>
        <dbReference type="EC" id="1.8.4.10"/>
    </reaction>
</comment>
<comment type="cofactor">
    <cofactor evidence="1">
        <name>[4Fe-4S] cluster</name>
        <dbReference type="ChEBI" id="CHEBI:49883"/>
    </cofactor>
    <text evidence="1">Binds 1 [4Fe-4S] cluster per subunit.</text>
</comment>
<comment type="pathway">
    <text evidence="1">Sulfur metabolism; hydrogen sulfide biosynthesis; sulfite from sulfate.</text>
</comment>
<comment type="subcellular location">
    <subcellularLocation>
        <location evidence="1">Cytoplasm</location>
    </subcellularLocation>
</comment>
<comment type="induction">
    <text evidence="2">Up-regulated by sulfur starvation and repressed by cysteine. Also induced by O-acetyl-L-serine (OAS), a direct precursor of cysteine, maybe via inactivation of a putative transcriptional repressor of the cysH operon whose activity is controlled by the intracellular levels of OAS.</text>
</comment>
<comment type="similarity">
    <text evidence="1 4">Belongs to the PAPS reductase family. CysH subfamily.</text>
</comment>